<proteinExistence type="inferred from homology"/>
<accession>Q12VD1</accession>
<dbReference type="EC" id="2.1.1.195" evidence="1"/>
<dbReference type="EMBL" id="CP000300">
    <property type="protein sequence ID" value="ABE52595.1"/>
    <property type="molecule type" value="Genomic_DNA"/>
</dbReference>
<dbReference type="SMR" id="Q12VD1"/>
<dbReference type="STRING" id="259564.Mbur_1702"/>
<dbReference type="KEGG" id="mbu:Mbur_1702"/>
<dbReference type="HOGENOM" id="CLU_820433_0_0_2"/>
<dbReference type="UniPathway" id="UPA00148">
    <property type="reaction ID" value="UER00227"/>
</dbReference>
<dbReference type="Proteomes" id="UP000001979">
    <property type="component" value="Chromosome"/>
</dbReference>
<dbReference type="GO" id="GO:0043780">
    <property type="term" value="F:cobalt-precorrin-5B C1-methyltransferase activity"/>
    <property type="evidence" value="ECO:0007669"/>
    <property type="project" value="RHEA"/>
</dbReference>
<dbReference type="GO" id="GO:0019251">
    <property type="term" value="P:anaerobic cobalamin biosynthetic process"/>
    <property type="evidence" value="ECO:0007669"/>
    <property type="project" value="UniProtKB-UniRule"/>
</dbReference>
<dbReference type="GO" id="GO:0032259">
    <property type="term" value="P:methylation"/>
    <property type="evidence" value="ECO:0007669"/>
    <property type="project" value="UniProtKB-KW"/>
</dbReference>
<dbReference type="Gene3D" id="3.30.2110.10">
    <property type="entry name" value="CbiD-like"/>
    <property type="match status" value="1"/>
</dbReference>
<dbReference type="Gene3D" id="3.40.50.10720">
    <property type="entry name" value="CbiD-like domains"/>
    <property type="match status" value="1"/>
</dbReference>
<dbReference type="HAMAP" id="MF_00787">
    <property type="entry name" value="CbiD"/>
    <property type="match status" value="1"/>
</dbReference>
<dbReference type="InterPro" id="IPR002748">
    <property type="entry name" value="CbiD"/>
</dbReference>
<dbReference type="InterPro" id="IPR036074">
    <property type="entry name" value="CbiD_sf"/>
</dbReference>
<dbReference type="NCBIfam" id="NF000855">
    <property type="entry name" value="PRK00075.2-4"/>
    <property type="match status" value="1"/>
</dbReference>
<dbReference type="NCBIfam" id="NF000856">
    <property type="entry name" value="PRK00075.2-5"/>
    <property type="match status" value="1"/>
</dbReference>
<dbReference type="PANTHER" id="PTHR35863">
    <property type="entry name" value="COBALT-PRECORRIN-5B C(1)-METHYLTRANSFERASE"/>
    <property type="match status" value="1"/>
</dbReference>
<dbReference type="PANTHER" id="PTHR35863:SF1">
    <property type="entry name" value="COBALT-PRECORRIN-5B C(1)-METHYLTRANSFERASE"/>
    <property type="match status" value="1"/>
</dbReference>
<dbReference type="Pfam" id="PF01888">
    <property type="entry name" value="CbiD"/>
    <property type="match status" value="1"/>
</dbReference>
<dbReference type="PIRSF" id="PIRSF026782">
    <property type="entry name" value="CbiD"/>
    <property type="match status" value="1"/>
</dbReference>
<dbReference type="SUPFAM" id="SSF111342">
    <property type="entry name" value="CbiD-like"/>
    <property type="match status" value="1"/>
</dbReference>
<organism>
    <name type="scientific">Methanococcoides burtonii (strain DSM 6242 / NBRC 107633 / OCM 468 / ACE-M)</name>
    <dbReference type="NCBI Taxonomy" id="259564"/>
    <lineage>
        <taxon>Archaea</taxon>
        <taxon>Methanobacteriati</taxon>
        <taxon>Methanobacteriota</taxon>
        <taxon>Stenosarchaea group</taxon>
        <taxon>Methanomicrobia</taxon>
        <taxon>Methanosarcinales</taxon>
        <taxon>Methanosarcinaceae</taxon>
        <taxon>Methanococcoides</taxon>
    </lineage>
</organism>
<comment type="function">
    <text evidence="1">Catalyzes the methylation of C-1 in cobalt-precorrin-5B to form cobalt-precorrin-6A.</text>
</comment>
<comment type="catalytic activity">
    <reaction evidence="1">
        <text>Co-precorrin-5B + S-adenosyl-L-methionine = Co-precorrin-6A + S-adenosyl-L-homocysteine</text>
        <dbReference type="Rhea" id="RHEA:26285"/>
        <dbReference type="ChEBI" id="CHEBI:57856"/>
        <dbReference type="ChEBI" id="CHEBI:59789"/>
        <dbReference type="ChEBI" id="CHEBI:60063"/>
        <dbReference type="ChEBI" id="CHEBI:60064"/>
        <dbReference type="EC" id="2.1.1.195"/>
    </reaction>
</comment>
<comment type="pathway">
    <text evidence="1">Cofactor biosynthesis; adenosylcobalamin biosynthesis; cob(II)yrinate a,c-diamide from sirohydrochlorin (anaerobic route): step 6/10.</text>
</comment>
<comment type="similarity">
    <text evidence="1">Belongs to the CbiD family.</text>
</comment>
<gene>
    <name evidence="1" type="primary">cbiD</name>
    <name type="ordered locus">Mbur_1702</name>
</gene>
<reference key="1">
    <citation type="journal article" date="2009" name="ISME J.">
        <title>The genome sequence of the psychrophilic archaeon, Methanococcoides burtonii: the role of genome evolution in cold adaptation.</title>
        <authorList>
            <person name="Allen M.A."/>
            <person name="Lauro F.M."/>
            <person name="Williams T.J."/>
            <person name="Burg D."/>
            <person name="Siddiqui K.S."/>
            <person name="De Francisci D."/>
            <person name="Chong K.W."/>
            <person name="Pilak O."/>
            <person name="Chew H.H."/>
            <person name="De Maere M.Z."/>
            <person name="Ting L."/>
            <person name="Katrib M."/>
            <person name="Ng C."/>
            <person name="Sowers K.R."/>
            <person name="Galperin M.Y."/>
            <person name="Anderson I.J."/>
            <person name="Ivanova N."/>
            <person name="Dalin E."/>
            <person name="Martinez M."/>
            <person name="Lapidus A."/>
            <person name="Hauser L."/>
            <person name="Land M."/>
            <person name="Thomas T."/>
            <person name="Cavicchioli R."/>
        </authorList>
    </citation>
    <scope>NUCLEOTIDE SEQUENCE [LARGE SCALE GENOMIC DNA]</scope>
    <source>
        <strain>DSM 6242 / NBRC 107633 / OCM 468 / ACE-M</strain>
    </source>
</reference>
<name>CBID_METBU</name>
<keyword id="KW-0169">Cobalamin biosynthesis</keyword>
<keyword id="KW-0489">Methyltransferase</keyword>
<keyword id="KW-0949">S-adenosyl-L-methionine</keyword>
<keyword id="KW-0808">Transferase</keyword>
<sequence length="340" mass="36341">MSIIDPVNKSKVPQEWINKSNIPGDELEEGIMSGMLVVLSDGSILKRGYTTGTTATVAAKAAVLSLKKEIDHVSVPTPVGLRAHMDVKAKDGHAVAVKLNNDHESDITRGLEFVARAVESDKITITAGEGIGIVTRGGLQSKKGYPAINPRPMQQIMEAVVEAVEEIGIKGASVEISLPRGAEIAKQTLNGRIGVEGGISILGTTGFVEPWNDHLGEMKSDLIRDAAKVVLTTGRIGIRYSTMLFPDYTVVLAGSRISEFMESATGKVAICGLPGLVLKWGDPDMLKDSGFATVSEMIEVEPQGEHIRRAFEKTVEKGKGARIVVVDRDGTVLMDSGEQE</sequence>
<feature type="chain" id="PRO_0000257784" description="Cobalt-precorrin-5B C(1)-methyltransferase">
    <location>
        <begin position="1"/>
        <end position="340"/>
    </location>
</feature>
<evidence type="ECO:0000255" key="1">
    <source>
        <dbReference type="HAMAP-Rule" id="MF_00787"/>
    </source>
</evidence>
<protein>
    <recommendedName>
        <fullName evidence="1">Cobalt-precorrin-5B C(1)-methyltransferase</fullName>
        <ecNumber evidence="1">2.1.1.195</ecNumber>
    </recommendedName>
    <alternativeName>
        <fullName evidence="1">Cobalt-precorrin-6A synthase</fullName>
    </alternativeName>
</protein>